<gene>
    <name type="primary">rabF1-1</name>
    <name type="ORF">DDB_G0272905</name>
</gene>
<gene>
    <name type="primary">rabF1-2</name>
    <name type="ORF">DDB_G0273935</name>
</gene>
<feature type="chain" id="PRO_0000332752" description="Ras-related protein RabF1">
    <location>
        <begin position="1"/>
        <end position="187"/>
    </location>
</feature>
<feature type="propeptide" id="PRO_0000370832" description="Removed in mature form" evidence="2">
    <location>
        <begin position="188"/>
        <end position="190"/>
    </location>
</feature>
<feature type="short sequence motif" description="Effector region" evidence="1">
    <location>
        <begin position="37"/>
        <end position="44"/>
    </location>
</feature>
<feature type="binding site" evidence="1">
    <location>
        <begin position="15"/>
        <end position="22"/>
    </location>
    <ligand>
        <name>GTP</name>
        <dbReference type="ChEBI" id="CHEBI:37565"/>
    </ligand>
</feature>
<feature type="binding site" evidence="1">
    <location>
        <begin position="62"/>
        <end position="66"/>
    </location>
    <ligand>
        <name>GTP</name>
        <dbReference type="ChEBI" id="CHEBI:37565"/>
    </ligand>
</feature>
<feature type="binding site" evidence="1">
    <location>
        <begin position="119"/>
        <end position="122"/>
    </location>
    <ligand>
        <name>GTP</name>
        <dbReference type="ChEBI" id="CHEBI:37565"/>
    </ligand>
</feature>
<feature type="modified residue" description="Cysteine methyl ester" evidence="2">
    <location>
        <position position="187"/>
    </location>
</feature>
<feature type="lipid moiety-binding region" description="S-geranylgeranyl cysteine" evidence="1">
    <location>
        <position position="187"/>
    </location>
</feature>
<organism>
    <name type="scientific">Dictyostelium discoideum</name>
    <name type="common">Social amoeba</name>
    <dbReference type="NCBI Taxonomy" id="44689"/>
    <lineage>
        <taxon>Eukaryota</taxon>
        <taxon>Amoebozoa</taxon>
        <taxon>Evosea</taxon>
        <taxon>Eumycetozoa</taxon>
        <taxon>Dictyostelia</taxon>
        <taxon>Dictyosteliales</taxon>
        <taxon>Dictyosteliaceae</taxon>
        <taxon>Dictyostelium</taxon>
    </lineage>
</organism>
<dbReference type="EMBL" id="AAFI02000011">
    <property type="protein sequence ID" value="EAL70401.1"/>
    <property type="status" value="ALT_SEQ"/>
    <property type="molecule type" value="Genomic_DNA"/>
</dbReference>
<dbReference type="EMBL" id="AAFI02000009">
    <property type="protein sequence ID" value="EAL71090.1"/>
    <property type="molecule type" value="Genomic_DNA"/>
</dbReference>
<dbReference type="RefSeq" id="XP_644326.1">
    <property type="nucleotide sequence ID" value="XM_639234.1"/>
</dbReference>
<dbReference type="RefSeq" id="XP_645088.1">
    <property type="nucleotide sequence ID" value="XM_639996.1"/>
</dbReference>
<dbReference type="SMR" id="Q558I0"/>
<dbReference type="FunCoup" id="Q558I0">
    <property type="interactions" value="8"/>
</dbReference>
<dbReference type="STRING" id="44689.Q558I0"/>
<dbReference type="PaxDb" id="44689-DDB0229419"/>
<dbReference type="EnsemblProtists" id="EAL70401">
    <property type="protein sequence ID" value="EAL70401"/>
    <property type="gene ID" value="DDB_G0273935"/>
</dbReference>
<dbReference type="EnsemblProtists" id="EAL71090">
    <property type="protein sequence ID" value="EAL71090"/>
    <property type="gene ID" value="DDB_G0272905"/>
</dbReference>
<dbReference type="GeneID" id="8618762"/>
<dbReference type="GeneID" id="8619214"/>
<dbReference type="KEGG" id="ddi:DDB_G0272905"/>
<dbReference type="KEGG" id="ddi:DDB_G0273935"/>
<dbReference type="dictyBase" id="DDB_G0272905">
    <property type="gene designation" value="rabF1-1"/>
</dbReference>
<dbReference type="dictyBase" id="DDB_G0273935">
    <property type="gene designation" value="rabF1-2"/>
</dbReference>
<dbReference type="VEuPathDB" id="AmoebaDB:DDB_G0272905"/>
<dbReference type="eggNOG" id="KOG0084">
    <property type="taxonomic scope" value="Eukaryota"/>
</dbReference>
<dbReference type="HOGENOM" id="CLU_041217_10_1_1"/>
<dbReference type="InParanoid" id="Q558I0"/>
<dbReference type="OMA" id="IQIVARP"/>
<dbReference type="PhylomeDB" id="Q558I0"/>
<dbReference type="Reactome" id="R-DDI-162658">
    <property type="pathway name" value="Golgi Cisternae Pericentriolar Stack Reorganization"/>
</dbReference>
<dbReference type="Reactome" id="R-DDI-204005">
    <property type="pathway name" value="COPII-mediated vesicle transport"/>
</dbReference>
<dbReference type="Reactome" id="R-DDI-6807878">
    <property type="pathway name" value="COPI-mediated anterograde transport"/>
</dbReference>
<dbReference type="Reactome" id="R-DDI-6811434">
    <property type="pathway name" value="COPI-dependent Golgi-to-ER retrograde traffic"/>
</dbReference>
<dbReference type="Reactome" id="R-DDI-6811440">
    <property type="pathway name" value="Retrograde transport at the Trans-Golgi-Network"/>
</dbReference>
<dbReference type="Reactome" id="R-DDI-8873719">
    <property type="pathway name" value="RAB geranylgeranylation"/>
</dbReference>
<dbReference type="Reactome" id="R-DDI-8876198">
    <property type="pathway name" value="RAB GEFs exchange GTP for GDP on RABs"/>
</dbReference>
<dbReference type="PRO" id="PR:Q558I0"/>
<dbReference type="Proteomes" id="UP000002195">
    <property type="component" value="Chromosome 2"/>
</dbReference>
<dbReference type="GO" id="GO:0012505">
    <property type="term" value="C:endomembrane system"/>
    <property type="evidence" value="ECO:0000318"/>
    <property type="project" value="GO_Central"/>
</dbReference>
<dbReference type="GO" id="GO:0005811">
    <property type="term" value="C:lipid droplet"/>
    <property type="evidence" value="ECO:0007005"/>
    <property type="project" value="dictyBase"/>
</dbReference>
<dbReference type="GO" id="GO:0005886">
    <property type="term" value="C:plasma membrane"/>
    <property type="evidence" value="ECO:0007669"/>
    <property type="project" value="UniProtKB-SubCell"/>
</dbReference>
<dbReference type="GO" id="GO:0005525">
    <property type="term" value="F:GTP binding"/>
    <property type="evidence" value="ECO:0007669"/>
    <property type="project" value="UniProtKB-KW"/>
</dbReference>
<dbReference type="GO" id="GO:0003924">
    <property type="term" value="F:GTPase activity"/>
    <property type="evidence" value="ECO:0000318"/>
    <property type="project" value="GO_Central"/>
</dbReference>
<dbReference type="GO" id="GO:0006886">
    <property type="term" value="P:intracellular protein transport"/>
    <property type="evidence" value="ECO:0000318"/>
    <property type="project" value="GO_Central"/>
</dbReference>
<dbReference type="FunFam" id="3.40.50.300:FF:000586">
    <property type="entry name" value="Rab family GTPase"/>
    <property type="match status" value="1"/>
</dbReference>
<dbReference type="Gene3D" id="3.40.50.300">
    <property type="entry name" value="P-loop containing nucleotide triphosphate hydrolases"/>
    <property type="match status" value="1"/>
</dbReference>
<dbReference type="InterPro" id="IPR027417">
    <property type="entry name" value="P-loop_NTPase"/>
</dbReference>
<dbReference type="InterPro" id="IPR005225">
    <property type="entry name" value="Small_GTP-bd"/>
</dbReference>
<dbReference type="InterPro" id="IPR001806">
    <property type="entry name" value="Small_GTPase"/>
</dbReference>
<dbReference type="InterPro" id="IPR050305">
    <property type="entry name" value="Small_GTPase_Rab"/>
</dbReference>
<dbReference type="NCBIfam" id="TIGR00231">
    <property type="entry name" value="small_GTP"/>
    <property type="match status" value="1"/>
</dbReference>
<dbReference type="PANTHER" id="PTHR47980">
    <property type="entry name" value="LD44762P"/>
    <property type="match status" value="1"/>
</dbReference>
<dbReference type="Pfam" id="PF00071">
    <property type="entry name" value="Ras"/>
    <property type="match status" value="1"/>
</dbReference>
<dbReference type="PRINTS" id="PR00449">
    <property type="entry name" value="RASTRNSFRMNG"/>
</dbReference>
<dbReference type="SMART" id="SM00175">
    <property type="entry name" value="RAB"/>
    <property type="match status" value="1"/>
</dbReference>
<dbReference type="SMART" id="SM00176">
    <property type="entry name" value="RAN"/>
    <property type="match status" value="1"/>
</dbReference>
<dbReference type="SMART" id="SM00173">
    <property type="entry name" value="RAS"/>
    <property type="match status" value="1"/>
</dbReference>
<dbReference type="SMART" id="SM00174">
    <property type="entry name" value="RHO"/>
    <property type="match status" value="1"/>
</dbReference>
<dbReference type="SUPFAM" id="SSF52540">
    <property type="entry name" value="P-loop containing nucleoside triphosphate hydrolases"/>
    <property type="match status" value="1"/>
</dbReference>
<dbReference type="PROSITE" id="PS51419">
    <property type="entry name" value="RAB"/>
    <property type="match status" value="1"/>
</dbReference>
<protein>
    <recommendedName>
        <fullName>Ras-related protein RabF1</fullName>
    </recommendedName>
</protein>
<accession>Q558I0</accession>
<accession>Q556M9</accession>
<proteinExistence type="inferred from homology"/>
<comment type="subcellular location">
    <subcellularLocation>
        <location evidence="3">Cell membrane</location>
        <topology evidence="3">Lipid-anchor</topology>
        <orientation evidence="3">Cytoplasmic side</orientation>
    </subcellularLocation>
</comment>
<comment type="similarity">
    <text evidence="3">Belongs to the small GTPase superfamily. Rab family.</text>
</comment>
<comment type="caution">
    <text evidence="3">The gene for this protein is duplicated in strains AX3 and AX4. These strains contain a duplication of a segment of 750 kb of chromosome 2 compared to the corresponding sequence in strain AX2.</text>
</comment>
<comment type="sequence caution" evidence="3">
    <conflict type="erroneous gene model prediction">
        <sequence resource="EMBL-CDS" id="EAL70401"/>
    </conflict>
</comment>
<evidence type="ECO:0000250" key="1"/>
<evidence type="ECO:0000255" key="2"/>
<evidence type="ECO:0000305" key="3"/>
<sequence length="190" mass="21839">MSKEYEHLFKFVLAGDSGVGKTSILFRITDDTFTETHITIGIEFKIKTVYIEGKPIKLQIWDTAGEKRFRVHNSHYRGCHGVIIVYDVTDQRSFENVPSWIEDIRRYANENVIKIIIGNKNDLVSQKVVDPFLAQEFADSLDIPFKEISAKQSINIEEAFISLVKLCINRIEETSLKKTQSPEKNNCIIN</sequence>
<reference key="1">
    <citation type="journal article" date="2002" name="Nature">
        <title>Sequence and analysis of chromosome 2 of Dictyostelium discoideum.</title>
        <authorList>
            <person name="Gloeckner G."/>
            <person name="Eichinger L."/>
            <person name="Szafranski K."/>
            <person name="Pachebat J.A."/>
            <person name="Bankier A.T."/>
            <person name="Dear P.H."/>
            <person name="Lehmann R."/>
            <person name="Baumgart C."/>
            <person name="Parra G."/>
            <person name="Abril J.F."/>
            <person name="Guigo R."/>
            <person name="Kumpf K."/>
            <person name="Tunggal B."/>
            <person name="Cox E.C."/>
            <person name="Quail M.A."/>
            <person name="Platzer M."/>
            <person name="Rosenthal A."/>
            <person name="Noegel A.A."/>
        </authorList>
    </citation>
    <scope>NUCLEOTIDE SEQUENCE [LARGE SCALE GENOMIC DNA]</scope>
    <source>
        <strain>AX4</strain>
    </source>
</reference>
<reference key="2">
    <citation type="journal article" date="2005" name="Nature">
        <title>The genome of the social amoeba Dictyostelium discoideum.</title>
        <authorList>
            <person name="Eichinger L."/>
            <person name="Pachebat J.A."/>
            <person name="Gloeckner G."/>
            <person name="Rajandream M.A."/>
            <person name="Sucgang R."/>
            <person name="Berriman M."/>
            <person name="Song J."/>
            <person name="Olsen R."/>
            <person name="Szafranski K."/>
            <person name="Xu Q."/>
            <person name="Tunggal B."/>
            <person name="Kummerfeld S."/>
            <person name="Madera M."/>
            <person name="Konfortov B.A."/>
            <person name="Rivero F."/>
            <person name="Bankier A.T."/>
            <person name="Lehmann R."/>
            <person name="Hamlin N."/>
            <person name="Davies R."/>
            <person name="Gaudet P."/>
            <person name="Fey P."/>
            <person name="Pilcher K."/>
            <person name="Chen G."/>
            <person name="Saunders D."/>
            <person name="Sodergren E.J."/>
            <person name="Davis P."/>
            <person name="Kerhornou A."/>
            <person name="Nie X."/>
            <person name="Hall N."/>
            <person name="Anjard C."/>
            <person name="Hemphill L."/>
            <person name="Bason N."/>
            <person name="Farbrother P."/>
            <person name="Desany B."/>
            <person name="Just E."/>
            <person name="Morio T."/>
            <person name="Rost R."/>
            <person name="Churcher C.M."/>
            <person name="Cooper J."/>
            <person name="Haydock S."/>
            <person name="van Driessche N."/>
            <person name="Cronin A."/>
            <person name="Goodhead I."/>
            <person name="Muzny D.M."/>
            <person name="Mourier T."/>
            <person name="Pain A."/>
            <person name="Lu M."/>
            <person name="Harper D."/>
            <person name="Lindsay R."/>
            <person name="Hauser H."/>
            <person name="James K.D."/>
            <person name="Quiles M."/>
            <person name="Madan Babu M."/>
            <person name="Saito T."/>
            <person name="Buchrieser C."/>
            <person name="Wardroper A."/>
            <person name="Felder M."/>
            <person name="Thangavelu M."/>
            <person name="Johnson D."/>
            <person name="Knights A."/>
            <person name="Loulseged H."/>
            <person name="Mungall K.L."/>
            <person name="Oliver K."/>
            <person name="Price C."/>
            <person name="Quail M.A."/>
            <person name="Urushihara H."/>
            <person name="Hernandez J."/>
            <person name="Rabbinowitsch E."/>
            <person name="Steffen D."/>
            <person name="Sanders M."/>
            <person name="Ma J."/>
            <person name="Kohara Y."/>
            <person name="Sharp S."/>
            <person name="Simmonds M.N."/>
            <person name="Spiegler S."/>
            <person name="Tivey A."/>
            <person name="Sugano S."/>
            <person name="White B."/>
            <person name="Walker D."/>
            <person name="Woodward J.R."/>
            <person name="Winckler T."/>
            <person name="Tanaka Y."/>
            <person name="Shaulsky G."/>
            <person name="Schleicher M."/>
            <person name="Weinstock G.M."/>
            <person name="Rosenthal A."/>
            <person name="Cox E.C."/>
            <person name="Chisholm R.L."/>
            <person name="Gibbs R.A."/>
            <person name="Loomis W.F."/>
            <person name="Platzer M."/>
            <person name="Kay R.R."/>
            <person name="Williams J.G."/>
            <person name="Dear P.H."/>
            <person name="Noegel A.A."/>
            <person name="Barrell B.G."/>
            <person name="Kuspa A."/>
        </authorList>
    </citation>
    <scope>NUCLEOTIDE SEQUENCE [LARGE SCALE GENOMIC DNA]</scope>
    <source>
        <strain>AX4</strain>
    </source>
</reference>
<name>RABF1_DICDI</name>
<keyword id="KW-1003">Cell membrane</keyword>
<keyword id="KW-0342">GTP-binding</keyword>
<keyword id="KW-0449">Lipoprotein</keyword>
<keyword id="KW-0472">Membrane</keyword>
<keyword id="KW-0488">Methylation</keyword>
<keyword id="KW-0547">Nucleotide-binding</keyword>
<keyword id="KW-0636">Prenylation</keyword>
<keyword id="KW-1185">Reference proteome</keyword>